<reference key="1">
    <citation type="submission" date="2008-05" db="EMBL/GenBank/DDBJ databases">
        <title>Complete sequence of chromosome of Geobacter lovleyi SZ.</title>
        <authorList>
            <consortium name="US DOE Joint Genome Institute"/>
            <person name="Lucas S."/>
            <person name="Copeland A."/>
            <person name="Lapidus A."/>
            <person name="Glavina del Rio T."/>
            <person name="Dalin E."/>
            <person name="Tice H."/>
            <person name="Bruce D."/>
            <person name="Goodwin L."/>
            <person name="Pitluck S."/>
            <person name="Chertkov O."/>
            <person name="Meincke L."/>
            <person name="Brettin T."/>
            <person name="Detter J.C."/>
            <person name="Han C."/>
            <person name="Tapia R."/>
            <person name="Kuske C.R."/>
            <person name="Schmutz J."/>
            <person name="Larimer F."/>
            <person name="Land M."/>
            <person name="Hauser L."/>
            <person name="Kyrpides N."/>
            <person name="Mikhailova N."/>
            <person name="Sung Y."/>
            <person name="Fletcher K.E."/>
            <person name="Ritalahti K.M."/>
            <person name="Loeffler F.E."/>
            <person name="Richardson P."/>
        </authorList>
    </citation>
    <scope>NUCLEOTIDE SEQUENCE [LARGE SCALE GENOMIC DNA]</scope>
    <source>
        <strain>ATCC BAA-1151 / DSM 17278 / SZ</strain>
    </source>
</reference>
<comment type="function">
    <text evidence="1">Binds as a heterodimer with protein bS6 to the central domain of the 16S rRNA, where it helps stabilize the platform of the 30S subunit.</text>
</comment>
<comment type="subunit">
    <text evidence="1">Part of the 30S ribosomal subunit. Forms a tight heterodimer with protein bS6.</text>
</comment>
<comment type="similarity">
    <text evidence="1">Belongs to the bacterial ribosomal protein bS18 family.</text>
</comment>
<accession>B3E6H4</accession>
<sequence length="110" mass="12295">MSEATTTTTTTSAPRPGGRPSGPRPDRGPGGPRKKRPFQRRKVCRFCAEKDTTIDYKDPRTLRYFITERGKIVPRRISGNCSKHQREITEAIKRARNLALLPLAAGHALP</sequence>
<evidence type="ECO:0000255" key="1">
    <source>
        <dbReference type="HAMAP-Rule" id="MF_00270"/>
    </source>
</evidence>
<evidence type="ECO:0000256" key="2">
    <source>
        <dbReference type="SAM" id="MobiDB-lite"/>
    </source>
</evidence>
<evidence type="ECO:0000305" key="3"/>
<protein>
    <recommendedName>
        <fullName evidence="1">Small ribosomal subunit protein bS18</fullName>
    </recommendedName>
    <alternativeName>
        <fullName evidence="3">30S ribosomal protein S18</fullName>
    </alternativeName>
</protein>
<keyword id="KW-1185">Reference proteome</keyword>
<keyword id="KW-0687">Ribonucleoprotein</keyword>
<keyword id="KW-0689">Ribosomal protein</keyword>
<keyword id="KW-0694">RNA-binding</keyword>
<keyword id="KW-0699">rRNA-binding</keyword>
<dbReference type="EMBL" id="CP001089">
    <property type="protein sequence ID" value="ACD96321.1"/>
    <property type="molecule type" value="Genomic_DNA"/>
</dbReference>
<dbReference type="RefSeq" id="WP_012470653.1">
    <property type="nucleotide sequence ID" value="NC_010814.1"/>
</dbReference>
<dbReference type="SMR" id="B3E6H4"/>
<dbReference type="STRING" id="398767.Glov_2608"/>
<dbReference type="KEGG" id="glo:Glov_2608"/>
<dbReference type="eggNOG" id="COG0238">
    <property type="taxonomic scope" value="Bacteria"/>
</dbReference>
<dbReference type="HOGENOM" id="CLU_148710_0_0_7"/>
<dbReference type="OrthoDB" id="9812008at2"/>
<dbReference type="Proteomes" id="UP000002420">
    <property type="component" value="Chromosome"/>
</dbReference>
<dbReference type="GO" id="GO:0022627">
    <property type="term" value="C:cytosolic small ribosomal subunit"/>
    <property type="evidence" value="ECO:0007669"/>
    <property type="project" value="TreeGrafter"/>
</dbReference>
<dbReference type="GO" id="GO:0070181">
    <property type="term" value="F:small ribosomal subunit rRNA binding"/>
    <property type="evidence" value="ECO:0007669"/>
    <property type="project" value="TreeGrafter"/>
</dbReference>
<dbReference type="GO" id="GO:0003735">
    <property type="term" value="F:structural constituent of ribosome"/>
    <property type="evidence" value="ECO:0007669"/>
    <property type="project" value="InterPro"/>
</dbReference>
<dbReference type="GO" id="GO:0006412">
    <property type="term" value="P:translation"/>
    <property type="evidence" value="ECO:0007669"/>
    <property type="project" value="UniProtKB-UniRule"/>
</dbReference>
<dbReference type="FunFam" id="4.10.640.10:FF:000004">
    <property type="entry name" value="30S ribosomal protein S18"/>
    <property type="match status" value="1"/>
</dbReference>
<dbReference type="Gene3D" id="4.10.640.10">
    <property type="entry name" value="Ribosomal protein S18"/>
    <property type="match status" value="1"/>
</dbReference>
<dbReference type="HAMAP" id="MF_00270">
    <property type="entry name" value="Ribosomal_bS18"/>
    <property type="match status" value="1"/>
</dbReference>
<dbReference type="InterPro" id="IPR001648">
    <property type="entry name" value="Ribosomal_bS18"/>
</dbReference>
<dbReference type="InterPro" id="IPR018275">
    <property type="entry name" value="Ribosomal_bS18_CS"/>
</dbReference>
<dbReference type="InterPro" id="IPR036870">
    <property type="entry name" value="Ribosomal_bS18_sf"/>
</dbReference>
<dbReference type="NCBIfam" id="TIGR00165">
    <property type="entry name" value="S18"/>
    <property type="match status" value="1"/>
</dbReference>
<dbReference type="PANTHER" id="PTHR13479">
    <property type="entry name" value="30S RIBOSOMAL PROTEIN S18"/>
    <property type="match status" value="1"/>
</dbReference>
<dbReference type="PANTHER" id="PTHR13479:SF40">
    <property type="entry name" value="SMALL RIBOSOMAL SUBUNIT PROTEIN BS18M"/>
    <property type="match status" value="1"/>
</dbReference>
<dbReference type="Pfam" id="PF01084">
    <property type="entry name" value="Ribosomal_S18"/>
    <property type="match status" value="1"/>
</dbReference>
<dbReference type="PRINTS" id="PR00974">
    <property type="entry name" value="RIBOSOMALS18"/>
</dbReference>
<dbReference type="SUPFAM" id="SSF46911">
    <property type="entry name" value="Ribosomal protein S18"/>
    <property type="match status" value="1"/>
</dbReference>
<dbReference type="PROSITE" id="PS00057">
    <property type="entry name" value="RIBOSOMAL_S18"/>
    <property type="match status" value="1"/>
</dbReference>
<feature type="chain" id="PRO_1000119284" description="Small ribosomal subunit protein bS18">
    <location>
        <begin position="1"/>
        <end position="110"/>
    </location>
</feature>
<feature type="region of interest" description="Disordered" evidence="2">
    <location>
        <begin position="1"/>
        <end position="41"/>
    </location>
</feature>
<feature type="compositionally biased region" description="Low complexity" evidence="2">
    <location>
        <begin position="1"/>
        <end position="18"/>
    </location>
</feature>
<feature type="compositionally biased region" description="Basic residues" evidence="2">
    <location>
        <begin position="32"/>
        <end position="41"/>
    </location>
</feature>
<name>RS18_TRIL1</name>
<organism>
    <name type="scientific">Trichlorobacter lovleyi (strain ATCC BAA-1151 / DSM 17278 / SZ)</name>
    <name type="common">Geobacter lovleyi</name>
    <dbReference type="NCBI Taxonomy" id="398767"/>
    <lineage>
        <taxon>Bacteria</taxon>
        <taxon>Pseudomonadati</taxon>
        <taxon>Thermodesulfobacteriota</taxon>
        <taxon>Desulfuromonadia</taxon>
        <taxon>Geobacterales</taxon>
        <taxon>Geobacteraceae</taxon>
        <taxon>Trichlorobacter</taxon>
    </lineage>
</organism>
<gene>
    <name evidence="1" type="primary">rpsR</name>
    <name type="ordered locus">Glov_2608</name>
</gene>
<proteinExistence type="inferred from homology"/>